<gene>
    <name evidence="1" type="primary">menG</name>
    <name type="ordered locus">CPn_0515</name>
    <name type="ordered locus">CP_0238</name>
    <name type="ordered locus">CpB0536</name>
</gene>
<name>MENG_CHLPN</name>
<accession>Q9K2B6</accession>
<accession>Q9Z837</accession>
<protein>
    <recommendedName>
        <fullName evidence="1">Demethylmenaquinone methyltransferase</fullName>
        <ecNumber evidence="1">2.1.1.163</ecNumber>
    </recommendedName>
</protein>
<evidence type="ECO:0000255" key="1">
    <source>
        <dbReference type="HAMAP-Rule" id="MF_01813"/>
    </source>
</evidence>
<evidence type="ECO:0000305" key="2"/>
<keyword id="KW-0474">Menaquinone biosynthesis</keyword>
<keyword id="KW-0489">Methyltransferase</keyword>
<keyword id="KW-0949">S-adenosyl-L-methionine</keyword>
<keyword id="KW-0808">Transferase</keyword>
<proteinExistence type="inferred from homology"/>
<dbReference type="EC" id="2.1.1.163" evidence="1"/>
<dbReference type="EMBL" id="AE001363">
    <property type="protein sequence ID" value="AAD18655.1"/>
    <property type="molecule type" value="Genomic_DNA"/>
</dbReference>
<dbReference type="EMBL" id="AE002161">
    <property type="protein sequence ID" value="AAF38103.1"/>
    <property type="molecule type" value="Genomic_DNA"/>
</dbReference>
<dbReference type="EMBL" id="BA000008">
    <property type="protein sequence ID" value="BAA98721.1"/>
    <property type="molecule type" value="Genomic_DNA"/>
</dbReference>
<dbReference type="EMBL" id="AE009440">
    <property type="protein sequence ID" value="AAP98465.1"/>
    <property type="status" value="ALT_INIT"/>
    <property type="molecule type" value="Genomic_DNA"/>
</dbReference>
<dbReference type="PIR" id="A72070">
    <property type="entry name" value="A72070"/>
</dbReference>
<dbReference type="PIR" id="D81599">
    <property type="entry name" value="D81599"/>
</dbReference>
<dbReference type="PIR" id="G86554">
    <property type="entry name" value="G86554"/>
</dbReference>
<dbReference type="SMR" id="Q9K2B6"/>
<dbReference type="STRING" id="406984.CPK_ORF01030"/>
<dbReference type="GeneID" id="45050557"/>
<dbReference type="KEGG" id="cpa:CP_0238"/>
<dbReference type="KEGG" id="cpj:ubiE"/>
<dbReference type="KEGG" id="cpn:CPn_0515"/>
<dbReference type="KEGG" id="cpt:CpB0536"/>
<dbReference type="eggNOG" id="COG2226">
    <property type="taxonomic scope" value="Bacteria"/>
</dbReference>
<dbReference type="HOGENOM" id="CLU_037990_0_0_0"/>
<dbReference type="UniPathway" id="UPA00079">
    <property type="reaction ID" value="UER00169"/>
</dbReference>
<dbReference type="Proteomes" id="UP000000583">
    <property type="component" value="Chromosome"/>
</dbReference>
<dbReference type="Proteomes" id="UP000000801">
    <property type="component" value="Chromosome"/>
</dbReference>
<dbReference type="GO" id="GO:0043770">
    <property type="term" value="F:demethylmenaquinone methyltransferase activity"/>
    <property type="evidence" value="ECO:0007669"/>
    <property type="project" value="UniProtKB-UniRule"/>
</dbReference>
<dbReference type="GO" id="GO:0009234">
    <property type="term" value="P:menaquinone biosynthetic process"/>
    <property type="evidence" value="ECO:0007669"/>
    <property type="project" value="UniProtKB-UniRule"/>
</dbReference>
<dbReference type="GO" id="GO:0032259">
    <property type="term" value="P:methylation"/>
    <property type="evidence" value="ECO:0007669"/>
    <property type="project" value="UniProtKB-KW"/>
</dbReference>
<dbReference type="CDD" id="cd02440">
    <property type="entry name" value="AdoMet_MTases"/>
    <property type="match status" value="1"/>
</dbReference>
<dbReference type="Gene3D" id="3.40.50.150">
    <property type="entry name" value="Vaccinia Virus protein VP39"/>
    <property type="match status" value="1"/>
</dbReference>
<dbReference type="HAMAP" id="MF_01813">
    <property type="entry name" value="MenG_UbiE_methyltr"/>
    <property type="match status" value="1"/>
</dbReference>
<dbReference type="InterPro" id="IPR029063">
    <property type="entry name" value="SAM-dependent_MTases_sf"/>
</dbReference>
<dbReference type="InterPro" id="IPR004033">
    <property type="entry name" value="UbiE/COQ5_MeTrFase"/>
</dbReference>
<dbReference type="InterPro" id="IPR023576">
    <property type="entry name" value="UbiE/COQ5_MeTrFase_CS"/>
</dbReference>
<dbReference type="NCBIfam" id="TIGR01934">
    <property type="entry name" value="MenG_MenH_UbiE"/>
    <property type="match status" value="1"/>
</dbReference>
<dbReference type="NCBIfam" id="NF001244">
    <property type="entry name" value="PRK00216.1-5"/>
    <property type="match status" value="1"/>
</dbReference>
<dbReference type="PANTHER" id="PTHR43591:SF24">
    <property type="entry name" value="2-METHOXY-6-POLYPRENYL-1,4-BENZOQUINOL METHYLASE, MITOCHONDRIAL"/>
    <property type="match status" value="1"/>
</dbReference>
<dbReference type="PANTHER" id="PTHR43591">
    <property type="entry name" value="METHYLTRANSFERASE"/>
    <property type="match status" value="1"/>
</dbReference>
<dbReference type="Pfam" id="PF01209">
    <property type="entry name" value="Ubie_methyltran"/>
    <property type="match status" value="1"/>
</dbReference>
<dbReference type="SUPFAM" id="SSF53335">
    <property type="entry name" value="S-adenosyl-L-methionine-dependent methyltransferases"/>
    <property type="match status" value="1"/>
</dbReference>
<dbReference type="PROSITE" id="PS51608">
    <property type="entry name" value="SAM_MT_UBIE"/>
    <property type="match status" value="1"/>
</dbReference>
<dbReference type="PROSITE" id="PS01183">
    <property type="entry name" value="UBIE_1"/>
    <property type="match status" value="1"/>
</dbReference>
<organism>
    <name type="scientific">Chlamydia pneumoniae</name>
    <name type="common">Chlamydophila pneumoniae</name>
    <dbReference type="NCBI Taxonomy" id="83558"/>
    <lineage>
        <taxon>Bacteria</taxon>
        <taxon>Pseudomonadati</taxon>
        <taxon>Chlamydiota</taxon>
        <taxon>Chlamydiia</taxon>
        <taxon>Chlamydiales</taxon>
        <taxon>Chlamydiaceae</taxon>
        <taxon>Chlamydia/Chlamydophila group</taxon>
        <taxon>Chlamydia</taxon>
    </lineage>
</organism>
<comment type="function">
    <text evidence="1">Methyltransferase required for the conversion of demethylmenaquinol (DMKH2) to menaquinol (MKH2).</text>
</comment>
<comment type="catalytic activity">
    <reaction evidence="1">
        <text>a 2-demethylmenaquinol + S-adenosyl-L-methionine = a menaquinol + S-adenosyl-L-homocysteine + H(+)</text>
        <dbReference type="Rhea" id="RHEA:42640"/>
        <dbReference type="Rhea" id="RHEA-COMP:9539"/>
        <dbReference type="Rhea" id="RHEA-COMP:9563"/>
        <dbReference type="ChEBI" id="CHEBI:15378"/>
        <dbReference type="ChEBI" id="CHEBI:18151"/>
        <dbReference type="ChEBI" id="CHEBI:55437"/>
        <dbReference type="ChEBI" id="CHEBI:57856"/>
        <dbReference type="ChEBI" id="CHEBI:59789"/>
        <dbReference type="EC" id="2.1.1.163"/>
    </reaction>
</comment>
<comment type="pathway">
    <text evidence="1">Quinol/quinone metabolism; menaquinone biosynthesis; menaquinol from 1,4-dihydroxy-2-naphthoate: step 2/2.</text>
</comment>
<comment type="similarity">
    <text evidence="1">Belongs to the class I-like SAM-binding methyltransferase superfamily. MenG/UbiE family.</text>
</comment>
<comment type="sequence caution" evidence="2">
    <conflict type="erroneous initiation">
        <sequence resource="EMBL-CDS" id="AAP98465"/>
    </conflict>
</comment>
<feature type="chain" id="PRO_0000193265" description="Demethylmenaquinone methyltransferase">
    <location>
        <begin position="1"/>
        <end position="230"/>
    </location>
</feature>
<feature type="binding site" evidence="1">
    <location>
        <position position="57"/>
    </location>
    <ligand>
        <name>S-adenosyl-L-methionine</name>
        <dbReference type="ChEBI" id="CHEBI:59789"/>
    </ligand>
</feature>
<feature type="binding site" evidence="1">
    <location>
        <position position="77"/>
    </location>
    <ligand>
        <name>S-adenosyl-L-methionine</name>
        <dbReference type="ChEBI" id="CHEBI:59789"/>
    </ligand>
</feature>
<feature type="binding site" evidence="1">
    <location>
        <begin position="101"/>
        <end position="102"/>
    </location>
    <ligand>
        <name>S-adenosyl-L-methionine</name>
        <dbReference type="ChEBI" id="CHEBI:59789"/>
    </ligand>
</feature>
<sequence length="230" mass="25638">MEPSTNKPDCKKIFDSIASKYDRTNTILSLGMHHFWNRSLIQILGSGYSLLDLCAGTGKVAKRYIAAHPQASVTLVDFSSAMLDIAKQHLPQGSCSFIHSDINQLPLENHSYPLAAMAYGLRNLSDPHKALQEISRVLMPSGKLGILELTPPKKTHPTYSAHKLYLRAVVPWIGKSVSKDPDAYSYLSKSIQQLPKDHDLEDLFSKSGFYIAKKKKLFLGAATIWLLEKQ</sequence>
<reference key="1">
    <citation type="journal article" date="1999" name="Nat. Genet.">
        <title>Comparative genomes of Chlamydia pneumoniae and C. trachomatis.</title>
        <authorList>
            <person name="Kalman S."/>
            <person name="Mitchell W.P."/>
            <person name="Marathe R."/>
            <person name="Lammel C.J."/>
            <person name="Fan J."/>
            <person name="Hyman R.W."/>
            <person name="Olinger L."/>
            <person name="Grimwood J."/>
            <person name="Davis R.W."/>
            <person name="Stephens R.S."/>
        </authorList>
    </citation>
    <scope>NUCLEOTIDE SEQUENCE [LARGE SCALE GENOMIC DNA]</scope>
    <source>
        <strain>CWL029</strain>
    </source>
</reference>
<reference key="2">
    <citation type="journal article" date="2000" name="Nucleic Acids Res.">
        <title>Genome sequences of Chlamydia trachomatis MoPn and Chlamydia pneumoniae AR39.</title>
        <authorList>
            <person name="Read T.D."/>
            <person name="Brunham R.C."/>
            <person name="Shen C."/>
            <person name="Gill S.R."/>
            <person name="Heidelberg J.F."/>
            <person name="White O."/>
            <person name="Hickey E.K."/>
            <person name="Peterson J.D."/>
            <person name="Utterback T.R."/>
            <person name="Berry K.J."/>
            <person name="Bass S."/>
            <person name="Linher K.D."/>
            <person name="Weidman J.F."/>
            <person name="Khouri H.M."/>
            <person name="Craven B."/>
            <person name="Bowman C."/>
            <person name="Dodson R.J."/>
            <person name="Gwinn M.L."/>
            <person name="Nelson W.C."/>
            <person name="DeBoy R.T."/>
            <person name="Kolonay J.F."/>
            <person name="McClarty G."/>
            <person name="Salzberg S.L."/>
            <person name="Eisen J.A."/>
            <person name="Fraser C.M."/>
        </authorList>
    </citation>
    <scope>NUCLEOTIDE SEQUENCE [LARGE SCALE GENOMIC DNA]</scope>
    <source>
        <strain>AR39</strain>
    </source>
</reference>
<reference key="3">
    <citation type="journal article" date="2000" name="Nucleic Acids Res.">
        <title>Comparison of whole genome sequences of Chlamydia pneumoniae J138 from Japan and CWL029 from USA.</title>
        <authorList>
            <person name="Shirai M."/>
            <person name="Hirakawa H."/>
            <person name="Kimoto M."/>
            <person name="Tabuchi M."/>
            <person name="Kishi F."/>
            <person name="Ouchi K."/>
            <person name="Shiba T."/>
            <person name="Ishii K."/>
            <person name="Hattori M."/>
            <person name="Kuhara S."/>
            <person name="Nakazawa T."/>
        </authorList>
    </citation>
    <scope>NUCLEOTIDE SEQUENCE [LARGE SCALE GENOMIC DNA]</scope>
    <source>
        <strain>J138</strain>
    </source>
</reference>
<reference key="4">
    <citation type="submission" date="2002-05" db="EMBL/GenBank/DDBJ databases">
        <title>The genome sequence of Chlamydia pneumoniae TW183 and comparison with other Chlamydia strains based on whole genome sequence analysis.</title>
        <authorList>
            <person name="Geng M.M."/>
            <person name="Schuhmacher A."/>
            <person name="Muehldorfer I."/>
            <person name="Bensch K.W."/>
            <person name="Schaefer K.P."/>
            <person name="Schneider S."/>
            <person name="Pohl T."/>
            <person name="Essig A."/>
            <person name="Marre R."/>
            <person name="Melchers K."/>
        </authorList>
    </citation>
    <scope>NUCLEOTIDE SEQUENCE [LARGE SCALE GENOMIC DNA]</scope>
    <source>
        <strain>TW-183</strain>
    </source>
</reference>